<proteinExistence type="inferred from homology"/>
<feature type="chain" id="PRO_1000200198" description="Protein RnfH">
    <location>
        <begin position="1"/>
        <end position="96"/>
    </location>
</feature>
<reference key="1">
    <citation type="submission" date="2008-05" db="EMBL/GenBank/DDBJ databases">
        <title>Complete sequence of Shigella boydii serotype 18 strain BS512.</title>
        <authorList>
            <person name="Rasko D.A."/>
            <person name="Rosovitz M."/>
            <person name="Maurelli A.T."/>
            <person name="Myers G."/>
            <person name="Seshadri R."/>
            <person name="Cer R."/>
            <person name="Jiang L."/>
            <person name="Ravel J."/>
            <person name="Sebastian Y."/>
        </authorList>
    </citation>
    <scope>NUCLEOTIDE SEQUENCE [LARGE SCALE GENOMIC DNA]</scope>
    <source>
        <strain>CDC 3083-94 / BS512</strain>
    </source>
</reference>
<gene>
    <name evidence="1" type="primary">rnfH</name>
    <name type="ordered locus">SbBS512_E3007</name>
</gene>
<name>RNFH_SHIB3</name>
<evidence type="ECO:0000255" key="1">
    <source>
        <dbReference type="HAMAP-Rule" id="MF_00460"/>
    </source>
</evidence>
<dbReference type="EMBL" id="CP001063">
    <property type="protein sequence ID" value="ACD07333.1"/>
    <property type="molecule type" value="Genomic_DNA"/>
</dbReference>
<dbReference type="RefSeq" id="WP_001117838.1">
    <property type="nucleotide sequence ID" value="NC_010658.1"/>
</dbReference>
<dbReference type="SMR" id="B2TYP0"/>
<dbReference type="STRING" id="344609.SbBS512_E3007"/>
<dbReference type="KEGG" id="sbc:SbBS512_E3007"/>
<dbReference type="HOGENOM" id="CLU_150721_1_0_6"/>
<dbReference type="Proteomes" id="UP000001030">
    <property type="component" value="Chromosome"/>
</dbReference>
<dbReference type="Gene3D" id="3.10.20.280">
    <property type="entry name" value="RnfH-like"/>
    <property type="match status" value="1"/>
</dbReference>
<dbReference type="HAMAP" id="MF_00460">
    <property type="entry name" value="UPF0125_RnfH"/>
    <property type="match status" value="1"/>
</dbReference>
<dbReference type="InterPro" id="IPR016155">
    <property type="entry name" value="Mopterin_synth/thiamin_S_b"/>
</dbReference>
<dbReference type="InterPro" id="IPR005346">
    <property type="entry name" value="RnfH"/>
</dbReference>
<dbReference type="InterPro" id="IPR037021">
    <property type="entry name" value="RnfH_sf"/>
</dbReference>
<dbReference type="NCBIfam" id="NF002490">
    <property type="entry name" value="PRK01777.1"/>
    <property type="match status" value="1"/>
</dbReference>
<dbReference type="PANTHER" id="PTHR37483">
    <property type="entry name" value="UPF0125 PROTEIN RATB"/>
    <property type="match status" value="1"/>
</dbReference>
<dbReference type="PANTHER" id="PTHR37483:SF1">
    <property type="entry name" value="UPF0125 PROTEIN RATB"/>
    <property type="match status" value="1"/>
</dbReference>
<dbReference type="Pfam" id="PF03658">
    <property type="entry name" value="Ub-RnfH"/>
    <property type="match status" value="1"/>
</dbReference>
<dbReference type="SUPFAM" id="SSF54285">
    <property type="entry name" value="MoaD/ThiS"/>
    <property type="match status" value="1"/>
</dbReference>
<accession>B2TYP0</accession>
<comment type="similarity">
    <text evidence="1">Belongs to the UPF0125 (RnfH) family.</text>
</comment>
<protein>
    <recommendedName>
        <fullName evidence="1">Protein RnfH</fullName>
    </recommendedName>
</protein>
<keyword id="KW-1185">Reference proteome</keyword>
<organism>
    <name type="scientific">Shigella boydii serotype 18 (strain CDC 3083-94 / BS512)</name>
    <dbReference type="NCBI Taxonomy" id="344609"/>
    <lineage>
        <taxon>Bacteria</taxon>
        <taxon>Pseudomonadati</taxon>
        <taxon>Pseudomonadota</taxon>
        <taxon>Gammaproteobacteria</taxon>
        <taxon>Enterobacterales</taxon>
        <taxon>Enterobacteriaceae</taxon>
        <taxon>Shigella</taxon>
    </lineage>
</organism>
<sequence>MPGKIAVEVAYALPEKQYLQRVTLQEGATVEEAIRASGLLELRTDIDLTKNKVGIYSRPAKLSDSVHDGDRVEIYRPLIADPKELRRQRAEKSANK</sequence>